<evidence type="ECO:0000250" key="1">
    <source>
        <dbReference type="UniProtKB" id="P07902"/>
    </source>
</evidence>
<evidence type="ECO:0000255" key="2">
    <source>
        <dbReference type="PROSITE-ProRule" id="PRU10033"/>
    </source>
</evidence>
<evidence type="ECO:0000256" key="3">
    <source>
        <dbReference type="SAM" id="MobiDB-lite"/>
    </source>
</evidence>
<evidence type="ECO:0000305" key="4"/>
<keyword id="KW-0119">Carbohydrate metabolism</keyword>
<keyword id="KW-0299">Galactose metabolism</keyword>
<keyword id="KW-0479">Metal-binding</keyword>
<keyword id="KW-0548">Nucleotidyltransferase</keyword>
<keyword id="KW-1185">Reference proteome</keyword>
<keyword id="KW-0808">Transferase</keyword>
<keyword id="KW-0862">Zinc</keyword>
<name>GALT_RAT</name>
<organism>
    <name type="scientific">Rattus norvegicus</name>
    <name type="common">Rat</name>
    <dbReference type="NCBI Taxonomy" id="10116"/>
    <lineage>
        <taxon>Eukaryota</taxon>
        <taxon>Metazoa</taxon>
        <taxon>Chordata</taxon>
        <taxon>Craniata</taxon>
        <taxon>Vertebrata</taxon>
        <taxon>Euteleostomi</taxon>
        <taxon>Mammalia</taxon>
        <taxon>Eutheria</taxon>
        <taxon>Euarchontoglires</taxon>
        <taxon>Glires</taxon>
        <taxon>Rodentia</taxon>
        <taxon>Myomorpha</taxon>
        <taxon>Muroidea</taxon>
        <taxon>Muridae</taxon>
        <taxon>Murinae</taxon>
        <taxon>Rattus</taxon>
    </lineage>
</organism>
<sequence length="379" mass="43314">MSQSGADPEQRQQASEADAMAATFRASEHQHIRYNPLQDEWVLVSAHRMKRPWQGQVEPQLLKTVPRHDPLNPLCPGATRANGEVNPPYDGTFLFDNDFPALQPDAPDPGPSDHPLFRVEAARGVCKVMCFHPWSDVTLPLMSVPEIRAVIDAWASVTEELGAQYPWVQIFENKGAMMGCSNPHPHCQVWASNFLPDIAQREERSQQTYHNQHGKPLLLEYGHQELLRKERLVLTSEYWIVLVPFWAVWPFQTLLLPRRHVQRLPELTPAERDDLASTMKKLLTKYDNLFETSFPYSMGWHGAPMGLKTGATCDHWQLHAHYYPPLLRSATVRKFMVGYEMLAQAQRDLTPEQAAERLRVLPEVHYCLTQKDKETAATA</sequence>
<proteinExistence type="evidence at transcript level"/>
<comment type="function">
    <text evidence="1">Plays an important role in galactose metabolism.</text>
</comment>
<comment type="catalytic activity">
    <reaction evidence="1">
        <text>alpha-D-galactose 1-phosphate + UDP-alpha-D-glucose = alpha-D-glucose 1-phosphate + UDP-alpha-D-galactose</text>
        <dbReference type="Rhea" id="RHEA:13989"/>
        <dbReference type="ChEBI" id="CHEBI:58336"/>
        <dbReference type="ChEBI" id="CHEBI:58601"/>
        <dbReference type="ChEBI" id="CHEBI:58885"/>
        <dbReference type="ChEBI" id="CHEBI:66914"/>
        <dbReference type="EC" id="2.7.7.12"/>
    </reaction>
</comment>
<comment type="cofactor">
    <cofactor evidence="1">
        <name>Zn(2+)</name>
        <dbReference type="ChEBI" id="CHEBI:29105"/>
    </cofactor>
    <text evidence="1">Binds 2 zinc ions per subunit.</text>
</comment>
<comment type="pathway">
    <text evidence="1">Carbohydrate metabolism; galactose metabolism.</text>
</comment>
<comment type="subunit">
    <text evidence="1">Homodimer.</text>
</comment>
<comment type="similarity">
    <text evidence="4">Belongs to the galactose-1-phosphate uridylyltransferase type 1 family.</text>
</comment>
<dbReference type="EC" id="2.7.7.12" evidence="1"/>
<dbReference type="EMBL" id="L05541">
    <property type="protein sequence ID" value="AAC37609.1"/>
    <property type="molecule type" value="Genomic_DNA"/>
</dbReference>
<dbReference type="EMBL" id="BC098756">
    <property type="protein sequence ID" value="AAH98756.1"/>
    <property type="molecule type" value="mRNA"/>
</dbReference>
<dbReference type="PIR" id="A56685">
    <property type="entry name" value="A56685"/>
</dbReference>
<dbReference type="RefSeq" id="NP_001013107.1">
    <property type="nucleotide sequence ID" value="NM_001013089.2"/>
</dbReference>
<dbReference type="SMR" id="P43424"/>
<dbReference type="FunCoup" id="P43424">
    <property type="interactions" value="966"/>
</dbReference>
<dbReference type="STRING" id="10116.ENSRNOP00000019886"/>
<dbReference type="PhosphoSitePlus" id="P43424"/>
<dbReference type="PaxDb" id="10116-ENSRNOP00000019886"/>
<dbReference type="GeneID" id="298003"/>
<dbReference type="KEGG" id="rno:298003"/>
<dbReference type="UCSC" id="RGD:1306483">
    <property type="organism name" value="rat"/>
</dbReference>
<dbReference type="AGR" id="RGD:1306483"/>
<dbReference type="CTD" id="2592"/>
<dbReference type="RGD" id="1306483">
    <property type="gene designation" value="Galt"/>
</dbReference>
<dbReference type="VEuPathDB" id="HostDB:ENSRNOG00000014766"/>
<dbReference type="eggNOG" id="KOG2958">
    <property type="taxonomic scope" value="Eukaryota"/>
</dbReference>
<dbReference type="HOGENOM" id="CLU_029960_0_1_1"/>
<dbReference type="InParanoid" id="P43424"/>
<dbReference type="OrthoDB" id="17671at9989"/>
<dbReference type="PhylomeDB" id="P43424"/>
<dbReference type="TreeFam" id="TF300018"/>
<dbReference type="BRENDA" id="2.7.7.12">
    <property type="organism ID" value="5301"/>
</dbReference>
<dbReference type="Reactome" id="R-RNO-70370">
    <property type="pathway name" value="Galactose catabolism"/>
</dbReference>
<dbReference type="SABIO-RK" id="P43424"/>
<dbReference type="UniPathway" id="UPA00214"/>
<dbReference type="PRO" id="PR:P43424"/>
<dbReference type="Proteomes" id="UP000002494">
    <property type="component" value="Chromosome 5"/>
</dbReference>
<dbReference type="Bgee" id="ENSRNOG00000014766">
    <property type="expression patterns" value="Expressed in liver and 20 other cell types or tissues"/>
</dbReference>
<dbReference type="GO" id="GO:0005737">
    <property type="term" value="C:cytoplasm"/>
    <property type="evidence" value="ECO:0000318"/>
    <property type="project" value="GO_Central"/>
</dbReference>
<dbReference type="GO" id="GO:0005794">
    <property type="term" value="C:Golgi apparatus"/>
    <property type="evidence" value="ECO:0000266"/>
    <property type="project" value="RGD"/>
</dbReference>
<dbReference type="GO" id="GO:0005536">
    <property type="term" value="F:D-glucose binding"/>
    <property type="evidence" value="ECO:0000305"/>
    <property type="project" value="RGD"/>
</dbReference>
<dbReference type="GO" id="GO:0005534">
    <property type="term" value="F:galactose binding"/>
    <property type="evidence" value="ECO:0000305"/>
    <property type="project" value="RGD"/>
</dbReference>
<dbReference type="GO" id="GO:0008108">
    <property type="term" value="F:UDP-glucose:hexose-1-phosphate uridylyltransferase activity"/>
    <property type="evidence" value="ECO:0000314"/>
    <property type="project" value="RGD"/>
</dbReference>
<dbReference type="GO" id="GO:0008270">
    <property type="term" value="F:zinc ion binding"/>
    <property type="evidence" value="ECO:0000250"/>
    <property type="project" value="UniProtKB"/>
</dbReference>
<dbReference type="GO" id="GO:0033499">
    <property type="term" value="P:galactose catabolic process via UDP-galactose, Leloir pathway"/>
    <property type="evidence" value="ECO:0000266"/>
    <property type="project" value="RGD"/>
</dbReference>
<dbReference type="GO" id="GO:0006012">
    <property type="term" value="P:galactose metabolic process"/>
    <property type="evidence" value="ECO:0000314"/>
    <property type="project" value="RGD"/>
</dbReference>
<dbReference type="GO" id="GO:0061623">
    <property type="term" value="P:glycolytic process from galactose"/>
    <property type="evidence" value="ECO:0000266"/>
    <property type="project" value="RGD"/>
</dbReference>
<dbReference type="GO" id="GO:0006258">
    <property type="term" value="P:UDP-alpha-D-glucose catabolic process"/>
    <property type="evidence" value="ECO:0000314"/>
    <property type="project" value="RGD"/>
</dbReference>
<dbReference type="GO" id="GO:0006011">
    <property type="term" value="P:UDP-alpha-D-glucose metabolic process"/>
    <property type="evidence" value="ECO:0000266"/>
    <property type="project" value="RGD"/>
</dbReference>
<dbReference type="CDD" id="cd00608">
    <property type="entry name" value="GalT"/>
    <property type="match status" value="1"/>
</dbReference>
<dbReference type="FunFam" id="3.30.428.10:FF:000001">
    <property type="entry name" value="Galactose-1-phosphate uridylyltransferase"/>
    <property type="match status" value="1"/>
</dbReference>
<dbReference type="FunFam" id="3.30.428.10:FF:000002">
    <property type="entry name" value="Galactose-1-phosphate uridylyltransferase"/>
    <property type="match status" value="1"/>
</dbReference>
<dbReference type="Gene3D" id="3.30.428.10">
    <property type="entry name" value="HIT-like"/>
    <property type="match status" value="2"/>
</dbReference>
<dbReference type="InterPro" id="IPR001937">
    <property type="entry name" value="GalP_UDPtransf1"/>
</dbReference>
<dbReference type="InterPro" id="IPR019779">
    <property type="entry name" value="GalP_UDPtransf1_His-AS"/>
</dbReference>
<dbReference type="InterPro" id="IPR005850">
    <property type="entry name" value="GalP_Utransf_C"/>
</dbReference>
<dbReference type="InterPro" id="IPR005849">
    <property type="entry name" value="GalP_Utransf_N"/>
</dbReference>
<dbReference type="InterPro" id="IPR036265">
    <property type="entry name" value="HIT-like_sf"/>
</dbReference>
<dbReference type="NCBIfam" id="TIGR00209">
    <property type="entry name" value="galT_1"/>
    <property type="match status" value="1"/>
</dbReference>
<dbReference type="NCBIfam" id="NF008724">
    <property type="entry name" value="PRK11720.1"/>
    <property type="match status" value="1"/>
</dbReference>
<dbReference type="PANTHER" id="PTHR11943">
    <property type="entry name" value="GALACTOSE-1-PHOSPHATE URIDYLYLTRANSFERASE"/>
    <property type="match status" value="1"/>
</dbReference>
<dbReference type="PANTHER" id="PTHR11943:SF1">
    <property type="entry name" value="GALACTOSE-1-PHOSPHATE URIDYLYLTRANSFERASE"/>
    <property type="match status" value="1"/>
</dbReference>
<dbReference type="Pfam" id="PF02744">
    <property type="entry name" value="GalP_UDP_tr_C"/>
    <property type="match status" value="1"/>
</dbReference>
<dbReference type="Pfam" id="PF01087">
    <property type="entry name" value="GalP_UDP_transf"/>
    <property type="match status" value="1"/>
</dbReference>
<dbReference type="PIRSF" id="PIRSF000808">
    <property type="entry name" value="GalT"/>
    <property type="match status" value="1"/>
</dbReference>
<dbReference type="SUPFAM" id="SSF54197">
    <property type="entry name" value="HIT-like"/>
    <property type="match status" value="2"/>
</dbReference>
<dbReference type="PROSITE" id="PS00117">
    <property type="entry name" value="GAL_P_UDP_TRANSF_I"/>
    <property type="match status" value="1"/>
</dbReference>
<reference key="1">
    <citation type="journal article" date="1993" name="DNA Seq.">
        <title>Rat galactose-1-phosphate uridyltransferase coding sequence, transcription start site and genomic organization.</title>
        <authorList>
            <person name="Heidenreich R.A."/>
            <person name="Mallee J."/>
            <person name="Segal S."/>
        </authorList>
    </citation>
    <scope>NUCLEOTIDE SEQUENCE [GENOMIC DNA]</scope>
    <source>
        <strain>Sprague-Dawley</strain>
        <tissue>Liver</tissue>
    </source>
</reference>
<reference key="2">
    <citation type="journal article" date="2004" name="Genome Res.">
        <title>The status, quality, and expansion of the NIH full-length cDNA project: the Mammalian Gene Collection (MGC).</title>
        <authorList>
            <consortium name="The MGC Project Team"/>
        </authorList>
    </citation>
    <scope>NUCLEOTIDE SEQUENCE [LARGE SCALE MRNA]</scope>
    <source>
        <tissue>Liver</tissue>
    </source>
</reference>
<protein>
    <recommendedName>
        <fullName>Galactose-1-phosphate uridylyltransferase</fullName>
        <shortName>Gal-1-P uridylyltransferase</shortName>
        <ecNumber evidence="1">2.7.7.12</ecNumber>
    </recommendedName>
    <alternativeName>
        <fullName>UDP-glucose--hexose-1-phosphate uridylyltransferase</fullName>
    </alternativeName>
</protein>
<gene>
    <name type="primary">Galt</name>
</gene>
<feature type="chain" id="PRO_0000169884" description="Galactose-1-phosphate uridylyltransferase">
    <location>
        <begin position="1"/>
        <end position="379"/>
    </location>
</feature>
<feature type="region of interest" description="Disordered" evidence="3">
    <location>
        <begin position="1"/>
        <end position="20"/>
    </location>
</feature>
<feature type="compositionally biased region" description="Polar residues" evidence="3">
    <location>
        <begin position="1"/>
        <end position="15"/>
    </location>
</feature>
<feature type="active site" description="Tele-UMP-histidine intermediate" evidence="2">
    <location>
        <position position="186"/>
    </location>
</feature>
<feature type="binding site" evidence="2">
    <location>
        <position position="75"/>
    </location>
    <ligand>
        <name>Zn(2+)</name>
        <dbReference type="ChEBI" id="CHEBI:29105"/>
        <label>1</label>
    </ligand>
</feature>
<feature type="binding site" description="in other chain" evidence="1">
    <location>
        <position position="81"/>
    </location>
    <ligand>
        <name>UDP-alpha-D-glucose</name>
        <dbReference type="ChEBI" id="CHEBI:58885"/>
        <note>ligand shared between dimeric partners</note>
    </ligand>
</feature>
<feature type="binding site" description="in other chain" evidence="1">
    <location>
        <begin position="97"/>
        <end position="98"/>
    </location>
    <ligand>
        <name>UDP-alpha-D-glucose</name>
        <dbReference type="ChEBI" id="CHEBI:58885"/>
        <note>ligand shared between dimeric partners</note>
    </ligand>
</feature>
<feature type="binding site" evidence="1">
    <location>
        <position position="173"/>
    </location>
    <ligand>
        <name>UDP-alpha-D-glucose</name>
        <dbReference type="ChEBI" id="CHEBI:58885"/>
        <note>ligand shared between dimeric partners</note>
    </ligand>
</feature>
<feature type="binding site" evidence="2">
    <location>
        <position position="184"/>
    </location>
    <ligand>
        <name>Zn(2+)</name>
        <dbReference type="ChEBI" id="CHEBI:29105"/>
        <label>1</label>
    </ligand>
</feature>
<feature type="binding site" description="in other chain" evidence="1">
    <location>
        <position position="188"/>
    </location>
    <ligand>
        <name>UDP-alpha-D-glucose</name>
        <dbReference type="ChEBI" id="CHEBI:58885"/>
        <note>ligand shared between dimeric partners</note>
    </ligand>
</feature>
<feature type="binding site" evidence="1">
    <location>
        <position position="202"/>
    </location>
    <ligand>
        <name>Zn(2+)</name>
        <dbReference type="ChEBI" id="CHEBI:29105"/>
        <label>2</label>
    </ligand>
</feature>
<feature type="binding site" evidence="1">
    <location>
        <position position="301"/>
    </location>
    <ligand>
        <name>Zn(2+)</name>
        <dbReference type="ChEBI" id="CHEBI:29105"/>
        <label>2</label>
    </ligand>
</feature>
<feature type="binding site" evidence="1">
    <location>
        <position position="319"/>
    </location>
    <ligand>
        <name>Zn(2+)</name>
        <dbReference type="ChEBI" id="CHEBI:29105"/>
        <label>2</label>
    </ligand>
</feature>
<feature type="binding site" evidence="1">
    <location>
        <position position="321"/>
    </location>
    <ligand>
        <name>Zn(2+)</name>
        <dbReference type="ChEBI" id="CHEBI:29105"/>
        <label>2</label>
    </ligand>
</feature>
<feature type="binding site" description="in other chain" evidence="1">
    <location>
        <begin position="334"/>
        <end position="337"/>
    </location>
    <ligand>
        <name>UDP-alpha-D-glucose</name>
        <dbReference type="ChEBI" id="CHEBI:58885"/>
        <note>ligand shared between dimeric partners</note>
    </ligand>
</feature>
<feature type="binding site" description="in other chain" evidence="1">
    <location>
        <begin position="339"/>
        <end position="340"/>
    </location>
    <ligand>
        <name>UDP-alpha-D-glucose</name>
        <dbReference type="ChEBI" id="CHEBI:58885"/>
        <note>ligand shared between dimeric partners</note>
    </ligand>
</feature>
<accession>P43424</accession>
<accession>Q4KM61</accession>